<dbReference type="EMBL" id="BX571857">
    <property type="protein sequence ID" value="CAG42981.1"/>
    <property type="molecule type" value="Genomic_DNA"/>
</dbReference>
<dbReference type="RefSeq" id="WP_000097322.1">
    <property type="nucleotide sequence ID" value="NC_002953.3"/>
</dbReference>
<dbReference type="SMR" id="Q6G9U3"/>
<dbReference type="KEGG" id="sas:SAS1204"/>
<dbReference type="HOGENOM" id="CLU_089475_6_3_9"/>
<dbReference type="GO" id="GO:0005829">
    <property type="term" value="C:cytosol"/>
    <property type="evidence" value="ECO:0007669"/>
    <property type="project" value="TreeGrafter"/>
</dbReference>
<dbReference type="GO" id="GO:0043024">
    <property type="term" value="F:ribosomal small subunit binding"/>
    <property type="evidence" value="ECO:0007669"/>
    <property type="project" value="TreeGrafter"/>
</dbReference>
<dbReference type="GO" id="GO:0030490">
    <property type="term" value="P:maturation of SSU-rRNA"/>
    <property type="evidence" value="ECO:0007669"/>
    <property type="project" value="UniProtKB-UniRule"/>
</dbReference>
<dbReference type="FunFam" id="3.30.300.20:FF:000009">
    <property type="entry name" value="Ribosome-binding factor A"/>
    <property type="match status" value="1"/>
</dbReference>
<dbReference type="Gene3D" id="3.30.300.20">
    <property type="match status" value="1"/>
</dbReference>
<dbReference type="HAMAP" id="MF_00003">
    <property type="entry name" value="RbfA"/>
    <property type="match status" value="1"/>
</dbReference>
<dbReference type="InterPro" id="IPR015946">
    <property type="entry name" value="KH_dom-like_a/b"/>
</dbReference>
<dbReference type="InterPro" id="IPR000238">
    <property type="entry name" value="RbfA"/>
</dbReference>
<dbReference type="InterPro" id="IPR023799">
    <property type="entry name" value="RbfA_dom_sf"/>
</dbReference>
<dbReference type="InterPro" id="IPR020053">
    <property type="entry name" value="Ribosome-bd_factorA_CS"/>
</dbReference>
<dbReference type="NCBIfam" id="TIGR00082">
    <property type="entry name" value="rbfA"/>
    <property type="match status" value="1"/>
</dbReference>
<dbReference type="PANTHER" id="PTHR33515">
    <property type="entry name" value="RIBOSOME-BINDING FACTOR A, CHLOROPLASTIC-RELATED"/>
    <property type="match status" value="1"/>
</dbReference>
<dbReference type="PANTHER" id="PTHR33515:SF1">
    <property type="entry name" value="RIBOSOME-BINDING FACTOR A, CHLOROPLASTIC-RELATED"/>
    <property type="match status" value="1"/>
</dbReference>
<dbReference type="Pfam" id="PF02033">
    <property type="entry name" value="RBFA"/>
    <property type="match status" value="1"/>
</dbReference>
<dbReference type="SUPFAM" id="SSF89919">
    <property type="entry name" value="Ribosome-binding factor A, RbfA"/>
    <property type="match status" value="1"/>
</dbReference>
<dbReference type="PROSITE" id="PS01319">
    <property type="entry name" value="RBFA"/>
    <property type="match status" value="1"/>
</dbReference>
<evidence type="ECO:0000255" key="1">
    <source>
        <dbReference type="HAMAP-Rule" id="MF_00003"/>
    </source>
</evidence>
<sequence>MSSMRAERVGEQMKKELMDIINNKVKDPRVGFITITDVVLTNDLSQAKVFLTVLGNDKEVENTFKALDKAKGFIKSELGSRMRLRIMPELMYEYDQSIEYGNKIERMIQDLHKQDR</sequence>
<feature type="chain" id="PRO_0000102734" description="Ribosome-binding factor A">
    <location>
        <begin position="1"/>
        <end position="116"/>
    </location>
</feature>
<comment type="function">
    <text evidence="1">One of several proteins that assist in the late maturation steps of the functional core of the 30S ribosomal subunit. Associates with free 30S ribosomal subunits (but not with 30S subunits that are part of 70S ribosomes or polysomes). Required for efficient processing of 16S rRNA. May interact with the 5'-terminal helix region of 16S rRNA.</text>
</comment>
<comment type="subunit">
    <text evidence="1">Monomer. Binds 30S ribosomal subunits, but not 50S ribosomal subunits or 70S ribosomes.</text>
</comment>
<comment type="subcellular location">
    <subcellularLocation>
        <location evidence="1">Cytoplasm</location>
    </subcellularLocation>
</comment>
<comment type="similarity">
    <text evidence="1">Belongs to the RbfA family.</text>
</comment>
<proteinExistence type="inferred from homology"/>
<protein>
    <recommendedName>
        <fullName evidence="1">Ribosome-binding factor A</fullName>
    </recommendedName>
</protein>
<organism>
    <name type="scientific">Staphylococcus aureus (strain MSSA476)</name>
    <dbReference type="NCBI Taxonomy" id="282459"/>
    <lineage>
        <taxon>Bacteria</taxon>
        <taxon>Bacillati</taxon>
        <taxon>Bacillota</taxon>
        <taxon>Bacilli</taxon>
        <taxon>Bacillales</taxon>
        <taxon>Staphylococcaceae</taxon>
        <taxon>Staphylococcus</taxon>
    </lineage>
</organism>
<reference key="1">
    <citation type="journal article" date="2004" name="Proc. Natl. Acad. Sci. U.S.A.">
        <title>Complete genomes of two clinical Staphylococcus aureus strains: evidence for the rapid evolution of virulence and drug resistance.</title>
        <authorList>
            <person name="Holden M.T.G."/>
            <person name="Feil E.J."/>
            <person name="Lindsay J.A."/>
            <person name="Peacock S.J."/>
            <person name="Day N.P.J."/>
            <person name="Enright M.C."/>
            <person name="Foster T.J."/>
            <person name="Moore C.E."/>
            <person name="Hurst L."/>
            <person name="Atkin R."/>
            <person name="Barron A."/>
            <person name="Bason N."/>
            <person name="Bentley S.D."/>
            <person name="Chillingworth C."/>
            <person name="Chillingworth T."/>
            <person name="Churcher C."/>
            <person name="Clark L."/>
            <person name="Corton C."/>
            <person name="Cronin A."/>
            <person name="Doggett J."/>
            <person name="Dowd L."/>
            <person name="Feltwell T."/>
            <person name="Hance Z."/>
            <person name="Harris B."/>
            <person name="Hauser H."/>
            <person name="Holroyd S."/>
            <person name="Jagels K."/>
            <person name="James K.D."/>
            <person name="Lennard N."/>
            <person name="Line A."/>
            <person name="Mayes R."/>
            <person name="Moule S."/>
            <person name="Mungall K."/>
            <person name="Ormond D."/>
            <person name="Quail M.A."/>
            <person name="Rabbinowitsch E."/>
            <person name="Rutherford K.M."/>
            <person name="Sanders M."/>
            <person name="Sharp S."/>
            <person name="Simmonds M."/>
            <person name="Stevens K."/>
            <person name="Whitehead S."/>
            <person name="Barrell B.G."/>
            <person name="Spratt B.G."/>
            <person name="Parkhill J."/>
        </authorList>
    </citation>
    <scope>NUCLEOTIDE SEQUENCE [LARGE SCALE GENOMIC DNA]</scope>
    <source>
        <strain>MSSA476</strain>
    </source>
</reference>
<keyword id="KW-0963">Cytoplasm</keyword>
<keyword id="KW-0690">Ribosome biogenesis</keyword>
<gene>
    <name evidence="1" type="primary">rbfA</name>
    <name type="ordered locus">SAS1204</name>
</gene>
<name>RBFA_STAAS</name>
<accession>Q6G9U3</accession>